<protein>
    <recommendedName>
        <fullName evidence="1">Malonate decarboxylase acyl carrier protein</fullName>
    </recommendedName>
    <alternativeName>
        <fullName evidence="1">Malonate decarboxylase subunit delta</fullName>
    </alternativeName>
</protein>
<gene>
    <name evidence="1" type="primary">mdcC</name>
    <name type="ordered locus">PA0210</name>
</gene>
<keyword id="KW-0963">Cytoplasm</keyword>
<keyword id="KW-0597">Phosphoprotein</keyword>
<keyword id="KW-1185">Reference proteome</keyword>
<evidence type="ECO:0000255" key="1">
    <source>
        <dbReference type="HAMAP-Rule" id="MF_00710"/>
    </source>
</evidence>
<comment type="function">
    <text evidence="1">Subunit of malonate decarboxylase, it is an acyl carrier protein to which acetyl and malonyl thioester residues are bound via a 2'-(5''-phosphoribosyl)-3'-dephospho-CoA prosthetic group and turn over during the catalytic mechanism.</text>
</comment>
<comment type="subcellular location">
    <subcellularLocation>
        <location evidence="1">Cytoplasm</location>
    </subcellularLocation>
</comment>
<comment type="PTM">
    <text evidence="1">Covalently binds the prosthetic group of malonate decarboxylase.</text>
</comment>
<comment type="similarity">
    <text evidence="1">Belongs to the MdcC family.</text>
</comment>
<sequence>METLTFEFPAGAPARGRALAGCVGSGDLEVLLEPAAGGALSIQVVTSVNGSGPRWQQLFARVFAASTAPAASIRIHDFGATPGVVRLRLEQALEEAGHD</sequence>
<feature type="chain" id="PRO_0000220287" description="Malonate decarboxylase acyl carrier protein">
    <location>
        <begin position="1"/>
        <end position="99"/>
    </location>
</feature>
<feature type="modified residue" description="O-(phosphoribosyl dephospho-coenzyme A)serine" evidence="1">
    <location>
        <position position="25"/>
    </location>
</feature>
<reference key="1">
    <citation type="journal article" date="2000" name="Nature">
        <title>Complete genome sequence of Pseudomonas aeruginosa PAO1, an opportunistic pathogen.</title>
        <authorList>
            <person name="Stover C.K."/>
            <person name="Pham X.-Q.T."/>
            <person name="Erwin A.L."/>
            <person name="Mizoguchi S.D."/>
            <person name="Warrener P."/>
            <person name="Hickey M.J."/>
            <person name="Brinkman F.S.L."/>
            <person name="Hufnagle W.O."/>
            <person name="Kowalik D.J."/>
            <person name="Lagrou M."/>
            <person name="Garber R.L."/>
            <person name="Goltry L."/>
            <person name="Tolentino E."/>
            <person name="Westbrock-Wadman S."/>
            <person name="Yuan Y."/>
            <person name="Brody L.L."/>
            <person name="Coulter S.N."/>
            <person name="Folger K.R."/>
            <person name="Kas A."/>
            <person name="Larbig K."/>
            <person name="Lim R.M."/>
            <person name="Smith K.A."/>
            <person name="Spencer D.H."/>
            <person name="Wong G.K.-S."/>
            <person name="Wu Z."/>
            <person name="Paulsen I.T."/>
            <person name="Reizer J."/>
            <person name="Saier M.H. Jr."/>
            <person name="Hancock R.E.W."/>
            <person name="Lory S."/>
            <person name="Olson M.V."/>
        </authorList>
    </citation>
    <scope>NUCLEOTIDE SEQUENCE [LARGE SCALE GENOMIC DNA]</scope>
    <source>
        <strain>ATCC 15692 / DSM 22644 / CIP 104116 / JCM 14847 / LMG 12228 / 1C / PRS 101 / PAO1</strain>
    </source>
</reference>
<dbReference type="EMBL" id="AE004091">
    <property type="protein sequence ID" value="AAG03599.1"/>
    <property type="molecule type" value="Genomic_DNA"/>
</dbReference>
<dbReference type="PIR" id="G83618">
    <property type="entry name" value="G83618"/>
</dbReference>
<dbReference type="RefSeq" id="NP_248901.1">
    <property type="nucleotide sequence ID" value="NC_002516.2"/>
</dbReference>
<dbReference type="RefSeq" id="WP_003084001.1">
    <property type="nucleotide sequence ID" value="NZ_QZGE01000024.1"/>
</dbReference>
<dbReference type="SMR" id="Q9I6S8"/>
<dbReference type="STRING" id="208964.PA0210"/>
<dbReference type="PaxDb" id="208964-PA0210"/>
<dbReference type="DNASU" id="883035"/>
<dbReference type="GeneID" id="883035"/>
<dbReference type="KEGG" id="pae:PA0210"/>
<dbReference type="PATRIC" id="fig|208964.12.peg.218"/>
<dbReference type="PseudoCAP" id="PA0210"/>
<dbReference type="HOGENOM" id="CLU_173135_1_0_6"/>
<dbReference type="InParanoid" id="Q9I6S8"/>
<dbReference type="OrthoDB" id="120290at2"/>
<dbReference type="PhylomeDB" id="Q9I6S8"/>
<dbReference type="BioCyc" id="PAER208964:G1FZ6-212-MONOMER"/>
<dbReference type="Proteomes" id="UP000002438">
    <property type="component" value="Chromosome"/>
</dbReference>
<dbReference type="GO" id="GO:0005737">
    <property type="term" value="C:cytoplasm"/>
    <property type="evidence" value="ECO:0007669"/>
    <property type="project" value="UniProtKB-SubCell"/>
</dbReference>
<dbReference type="GO" id="GO:0000036">
    <property type="term" value="F:acyl carrier activity"/>
    <property type="evidence" value="ECO:0007669"/>
    <property type="project" value="UniProtKB-UniRule"/>
</dbReference>
<dbReference type="HAMAP" id="MF_00710">
    <property type="entry name" value="Malonate_deCO2ase_dsu"/>
    <property type="match status" value="1"/>
</dbReference>
<dbReference type="InterPro" id="IPR023439">
    <property type="entry name" value="Mal_deCO2ase/Cit_lyase_ACP"/>
</dbReference>
<dbReference type="InterPro" id="IPR009662">
    <property type="entry name" value="Malonate_deCO2ase_dsu"/>
</dbReference>
<dbReference type="NCBIfam" id="TIGR03130">
    <property type="entry name" value="malonate_delta"/>
    <property type="match status" value="1"/>
</dbReference>
<dbReference type="NCBIfam" id="NF002293">
    <property type="entry name" value="PRK01220.1"/>
    <property type="match status" value="1"/>
</dbReference>
<dbReference type="Pfam" id="PF06857">
    <property type="entry name" value="ACP"/>
    <property type="match status" value="1"/>
</dbReference>
<organism>
    <name type="scientific">Pseudomonas aeruginosa (strain ATCC 15692 / DSM 22644 / CIP 104116 / JCM 14847 / LMG 12228 / 1C / PRS 101 / PAO1)</name>
    <dbReference type="NCBI Taxonomy" id="208964"/>
    <lineage>
        <taxon>Bacteria</taxon>
        <taxon>Pseudomonadati</taxon>
        <taxon>Pseudomonadota</taxon>
        <taxon>Gammaproteobacteria</taxon>
        <taxon>Pseudomonadales</taxon>
        <taxon>Pseudomonadaceae</taxon>
        <taxon>Pseudomonas</taxon>
    </lineage>
</organism>
<proteinExistence type="inferred from homology"/>
<accession>Q9I6S8</accession>
<name>MDCC_PSEAE</name>